<dbReference type="EC" id="6.1.1.22" evidence="1"/>
<dbReference type="EMBL" id="AE017180">
    <property type="protein sequence ID" value="AAR34532.1"/>
    <property type="molecule type" value="Genomic_DNA"/>
</dbReference>
<dbReference type="RefSeq" id="NP_952209.1">
    <property type="nucleotide sequence ID" value="NC_002939.5"/>
</dbReference>
<dbReference type="RefSeq" id="WP_010941817.1">
    <property type="nucleotide sequence ID" value="NC_002939.5"/>
</dbReference>
<dbReference type="SMR" id="Q74E08"/>
<dbReference type="FunCoup" id="Q74E08">
    <property type="interactions" value="459"/>
</dbReference>
<dbReference type="STRING" id="243231.GSU1156"/>
<dbReference type="EnsemblBacteria" id="AAR34532">
    <property type="protein sequence ID" value="AAR34532"/>
    <property type="gene ID" value="GSU1156"/>
</dbReference>
<dbReference type="KEGG" id="gsu:GSU1156"/>
<dbReference type="PATRIC" id="fig|243231.5.peg.1152"/>
<dbReference type="eggNOG" id="COG0017">
    <property type="taxonomic scope" value="Bacteria"/>
</dbReference>
<dbReference type="HOGENOM" id="CLU_004553_2_0_7"/>
<dbReference type="InParanoid" id="Q74E08"/>
<dbReference type="OrthoDB" id="9802326at2"/>
<dbReference type="Proteomes" id="UP000000577">
    <property type="component" value="Chromosome"/>
</dbReference>
<dbReference type="GO" id="GO:0005737">
    <property type="term" value="C:cytoplasm"/>
    <property type="evidence" value="ECO:0007669"/>
    <property type="project" value="UniProtKB-SubCell"/>
</dbReference>
<dbReference type="GO" id="GO:0004816">
    <property type="term" value="F:asparagine-tRNA ligase activity"/>
    <property type="evidence" value="ECO:0007669"/>
    <property type="project" value="UniProtKB-UniRule"/>
</dbReference>
<dbReference type="GO" id="GO:0005524">
    <property type="term" value="F:ATP binding"/>
    <property type="evidence" value="ECO:0007669"/>
    <property type="project" value="UniProtKB-UniRule"/>
</dbReference>
<dbReference type="GO" id="GO:0003676">
    <property type="term" value="F:nucleic acid binding"/>
    <property type="evidence" value="ECO:0007669"/>
    <property type="project" value="InterPro"/>
</dbReference>
<dbReference type="GO" id="GO:0006421">
    <property type="term" value="P:asparaginyl-tRNA aminoacylation"/>
    <property type="evidence" value="ECO:0000318"/>
    <property type="project" value="GO_Central"/>
</dbReference>
<dbReference type="CDD" id="cd00776">
    <property type="entry name" value="AsxRS_core"/>
    <property type="match status" value="1"/>
</dbReference>
<dbReference type="CDD" id="cd04318">
    <property type="entry name" value="EcAsnRS_like_N"/>
    <property type="match status" value="1"/>
</dbReference>
<dbReference type="FunFam" id="3.30.930.10:FF:000016">
    <property type="entry name" value="Asparagine--tRNA ligase"/>
    <property type="match status" value="1"/>
</dbReference>
<dbReference type="Gene3D" id="3.30.930.10">
    <property type="entry name" value="Bira Bifunctional Protein, Domain 2"/>
    <property type="match status" value="1"/>
</dbReference>
<dbReference type="Gene3D" id="2.40.50.140">
    <property type="entry name" value="Nucleic acid-binding proteins"/>
    <property type="match status" value="1"/>
</dbReference>
<dbReference type="HAMAP" id="MF_00534">
    <property type="entry name" value="Asn_tRNA_synth"/>
    <property type="match status" value="1"/>
</dbReference>
<dbReference type="InterPro" id="IPR004364">
    <property type="entry name" value="Aa-tRNA-synt_II"/>
</dbReference>
<dbReference type="InterPro" id="IPR006195">
    <property type="entry name" value="aa-tRNA-synth_II"/>
</dbReference>
<dbReference type="InterPro" id="IPR045864">
    <property type="entry name" value="aa-tRNA-synth_II/BPL/LPL"/>
</dbReference>
<dbReference type="InterPro" id="IPR004522">
    <property type="entry name" value="Asn-tRNA-ligase"/>
</dbReference>
<dbReference type="InterPro" id="IPR002312">
    <property type="entry name" value="Asp/Asn-tRNA-synth_IIb"/>
</dbReference>
<dbReference type="InterPro" id="IPR012340">
    <property type="entry name" value="NA-bd_OB-fold"/>
</dbReference>
<dbReference type="InterPro" id="IPR004365">
    <property type="entry name" value="NA-bd_OB_tRNA"/>
</dbReference>
<dbReference type="NCBIfam" id="TIGR00457">
    <property type="entry name" value="asnS"/>
    <property type="match status" value="1"/>
</dbReference>
<dbReference type="NCBIfam" id="NF003037">
    <property type="entry name" value="PRK03932.1"/>
    <property type="match status" value="1"/>
</dbReference>
<dbReference type="PANTHER" id="PTHR22594:SF34">
    <property type="entry name" value="ASPARAGINE--TRNA LIGASE, MITOCHONDRIAL-RELATED"/>
    <property type="match status" value="1"/>
</dbReference>
<dbReference type="PANTHER" id="PTHR22594">
    <property type="entry name" value="ASPARTYL/LYSYL-TRNA SYNTHETASE"/>
    <property type="match status" value="1"/>
</dbReference>
<dbReference type="Pfam" id="PF00152">
    <property type="entry name" value="tRNA-synt_2"/>
    <property type="match status" value="1"/>
</dbReference>
<dbReference type="Pfam" id="PF01336">
    <property type="entry name" value="tRNA_anti-codon"/>
    <property type="match status" value="1"/>
</dbReference>
<dbReference type="PRINTS" id="PR01042">
    <property type="entry name" value="TRNASYNTHASP"/>
</dbReference>
<dbReference type="SUPFAM" id="SSF55681">
    <property type="entry name" value="Class II aaRS and biotin synthetases"/>
    <property type="match status" value="1"/>
</dbReference>
<dbReference type="SUPFAM" id="SSF50249">
    <property type="entry name" value="Nucleic acid-binding proteins"/>
    <property type="match status" value="1"/>
</dbReference>
<dbReference type="PROSITE" id="PS50862">
    <property type="entry name" value="AA_TRNA_LIGASE_II"/>
    <property type="match status" value="1"/>
</dbReference>
<protein>
    <recommendedName>
        <fullName evidence="1">Asparagine--tRNA ligase</fullName>
        <ecNumber evidence="1">6.1.1.22</ecNumber>
    </recommendedName>
    <alternativeName>
        <fullName evidence="1">Asparaginyl-tRNA synthetase</fullName>
        <shortName evidence="1">AsnRS</shortName>
    </alternativeName>
</protein>
<gene>
    <name evidence="1" type="primary">asnS</name>
    <name type="ordered locus">GSU1156</name>
</gene>
<accession>Q74E08</accession>
<organism>
    <name type="scientific">Geobacter sulfurreducens (strain ATCC 51573 / DSM 12127 / PCA)</name>
    <dbReference type="NCBI Taxonomy" id="243231"/>
    <lineage>
        <taxon>Bacteria</taxon>
        <taxon>Pseudomonadati</taxon>
        <taxon>Thermodesulfobacteriota</taxon>
        <taxon>Desulfuromonadia</taxon>
        <taxon>Geobacterales</taxon>
        <taxon>Geobacteraceae</taxon>
        <taxon>Geobacter</taxon>
    </lineage>
</organism>
<proteinExistence type="inferred from homology"/>
<evidence type="ECO:0000255" key="1">
    <source>
        <dbReference type="HAMAP-Rule" id="MF_00534"/>
    </source>
</evidence>
<keyword id="KW-0030">Aminoacyl-tRNA synthetase</keyword>
<keyword id="KW-0067">ATP-binding</keyword>
<keyword id="KW-0963">Cytoplasm</keyword>
<keyword id="KW-0436">Ligase</keyword>
<keyword id="KW-0547">Nucleotide-binding</keyword>
<keyword id="KW-0648">Protein biosynthesis</keyword>
<keyword id="KW-1185">Reference proteome</keyword>
<sequence>MNERIRIREILAGTPAGTEVIVKGWVRTSRVGKGVAFLAVNDGSCLASLQVVAEPGLANYHELRGIGTGAAVAVRGIVAESPAAGQAVELHATKVVVVGGADEQYPLQKKRHTFEYLRTIAHLRPRSNTFGAVFRVRSSLAQAVHRFFAERGFLYVHTPIITTSDCEGAGELFRVTTLDPSAPPMADGAVDFSQDFFAAQAGLTVSGQLEGELFAQAFSDIYTFGPTFRAENSNTPRHAAEFWMIEPEMAFADLRDDAALAEDFFRYLCRHVLDNCAEDMAFFNEHVDRGLLARVEQVAGSSFAMMEYGVAIEHLKRAAVPFEYPVEWGLDLQTEHERYLTEQVVGGPVFVVNYPQEIKAFYMRRNDDGRTVAAMDLLVPKVGEIIGGSQREERYDLLESRMREGGIAPESLWWYLDSRRWGSTPHAGFGLGFERLIMYLTGMENIRDVIPFPRTPRHAEF</sequence>
<reference key="1">
    <citation type="journal article" date="2003" name="Science">
        <title>Genome of Geobacter sulfurreducens: metal reduction in subsurface environments.</title>
        <authorList>
            <person name="Methe B.A."/>
            <person name="Nelson K.E."/>
            <person name="Eisen J.A."/>
            <person name="Paulsen I.T."/>
            <person name="Nelson W.C."/>
            <person name="Heidelberg J.F."/>
            <person name="Wu D."/>
            <person name="Wu M."/>
            <person name="Ward N.L."/>
            <person name="Beanan M.J."/>
            <person name="Dodson R.J."/>
            <person name="Madupu R."/>
            <person name="Brinkac L.M."/>
            <person name="Daugherty S.C."/>
            <person name="DeBoy R.T."/>
            <person name="Durkin A.S."/>
            <person name="Gwinn M.L."/>
            <person name="Kolonay J.F."/>
            <person name="Sullivan S.A."/>
            <person name="Haft D.H."/>
            <person name="Selengut J."/>
            <person name="Davidsen T.M."/>
            <person name="Zafar N."/>
            <person name="White O."/>
            <person name="Tran B."/>
            <person name="Romero C."/>
            <person name="Forberger H.A."/>
            <person name="Weidman J.F."/>
            <person name="Khouri H.M."/>
            <person name="Feldblyum T.V."/>
            <person name="Utterback T.R."/>
            <person name="Van Aken S.E."/>
            <person name="Lovley D.R."/>
            <person name="Fraser C.M."/>
        </authorList>
    </citation>
    <scope>NUCLEOTIDE SEQUENCE [LARGE SCALE GENOMIC DNA]</scope>
    <source>
        <strain>ATCC 51573 / DSM 12127 / PCA</strain>
    </source>
</reference>
<comment type="catalytic activity">
    <reaction evidence="1">
        <text>tRNA(Asn) + L-asparagine + ATP = L-asparaginyl-tRNA(Asn) + AMP + diphosphate + H(+)</text>
        <dbReference type="Rhea" id="RHEA:11180"/>
        <dbReference type="Rhea" id="RHEA-COMP:9659"/>
        <dbReference type="Rhea" id="RHEA-COMP:9674"/>
        <dbReference type="ChEBI" id="CHEBI:15378"/>
        <dbReference type="ChEBI" id="CHEBI:30616"/>
        <dbReference type="ChEBI" id="CHEBI:33019"/>
        <dbReference type="ChEBI" id="CHEBI:58048"/>
        <dbReference type="ChEBI" id="CHEBI:78442"/>
        <dbReference type="ChEBI" id="CHEBI:78515"/>
        <dbReference type="ChEBI" id="CHEBI:456215"/>
        <dbReference type="EC" id="6.1.1.22"/>
    </reaction>
</comment>
<comment type="subunit">
    <text evidence="1">Homodimer.</text>
</comment>
<comment type="subcellular location">
    <subcellularLocation>
        <location evidence="1">Cytoplasm</location>
    </subcellularLocation>
</comment>
<comment type="similarity">
    <text evidence="1">Belongs to the class-II aminoacyl-tRNA synthetase family.</text>
</comment>
<name>SYN_GEOSL</name>
<feature type="chain" id="PRO_0000176412" description="Asparagine--tRNA ligase">
    <location>
        <begin position="1"/>
        <end position="461"/>
    </location>
</feature>